<keyword id="KW-0414">Isoprene biosynthesis</keyword>
<keyword id="KW-0464">Manganese</keyword>
<keyword id="KW-0479">Metal-binding</keyword>
<keyword id="KW-0521">NADP</keyword>
<keyword id="KW-0560">Oxidoreductase</keyword>
<keyword id="KW-1185">Reference proteome</keyword>
<accession>Q28PJ0</accession>
<reference key="1">
    <citation type="submission" date="2006-02" db="EMBL/GenBank/DDBJ databases">
        <title>Complete sequence of chromosome of Jannaschia sp. CCS1.</title>
        <authorList>
            <consortium name="US DOE Joint Genome Institute"/>
            <person name="Copeland A."/>
            <person name="Lucas S."/>
            <person name="Lapidus A."/>
            <person name="Barry K."/>
            <person name="Detter J.C."/>
            <person name="Glavina del Rio T."/>
            <person name="Hammon N."/>
            <person name="Israni S."/>
            <person name="Pitluck S."/>
            <person name="Brettin T."/>
            <person name="Bruce D."/>
            <person name="Han C."/>
            <person name="Tapia R."/>
            <person name="Gilna P."/>
            <person name="Chertkov O."/>
            <person name="Saunders E."/>
            <person name="Schmutz J."/>
            <person name="Larimer F."/>
            <person name="Land M."/>
            <person name="Kyrpides N."/>
            <person name="Lykidis A."/>
            <person name="Moran M.A."/>
            <person name="Belas R."/>
            <person name="Ye W."/>
            <person name="Buchan A."/>
            <person name="Gonzalez J.M."/>
            <person name="Schell M.A."/>
            <person name="Richardson P."/>
        </authorList>
    </citation>
    <scope>NUCLEOTIDE SEQUENCE [LARGE SCALE GENOMIC DNA]</scope>
    <source>
        <strain>CCS1</strain>
    </source>
</reference>
<protein>
    <recommendedName>
        <fullName evidence="1">1-deoxy-D-xylulose 5-phosphate reductoisomerase</fullName>
        <shortName evidence="1">DXP reductoisomerase</shortName>
        <ecNumber evidence="1">1.1.1.267</ecNumber>
    </recommendedName>
    <alternativeName>
        <fullName evidence="1">1-deoxyxylulose-5-phosphate reductoisomerase</fullName>
    </alternativeName>
    <alternativeName>
        <fullName evidence="1">2-C-methyl-D-erythritol 4-phosphate synthase</fullName>
    </alternativeName>
</protein>
<gene>
    <name evidence="1" type="primary">dxr</name>
    <name type="ordered locus">Jann_2455</name>
</gene>
<organism>
    <name type="scientific">Jannaschia sp. (strain CCS1)</name>
    <dbReference type="NCBI Taxonomy" id="290400"/>
    <lineage>
        <taxon>Bacteria</taxon>
        <taxon>Pseudomonadati</taxon>
        <taxon>Pseudomonadota</taxon>
        <taxon>Alphaproteobacteria</taxon>
        <taxon>Rhodobacterales</taxon>
        <taxon>Roseobacteraceae</taxon>
        <taxon>Jannaschia</taxon>
    </lineage>
</organism>
<feature type="chain" id="PRO_1000077336" description="1-deoxy-D-xylulose 5-phosphate reductoisomerase">
    <location>
        <begin position="1"/>
        <end position="393"/>
    </location>
</feature>
<feature type="binding site" evidence="1">
    <location>
        <position position="16"/>
    </location>
    <ligand>
        <name>NADPH</name>
        <dbReference type="ChEBI" id="CHEBI:57783"/>
    </ligand>
</feature>
<feature type="binding site" evidence="1">
    <location>
        <position position="17"/>
    </location>
    <ligand>
        <name>NADPH</name>
        <dbReference type="ChEBI" id="CHEBI:57783"/>
    </ligand>
</feature>
<feature type="binding site" evidence="1">
    <location>
        <position position="18"/>
    </location>
    <ligand>
        <name>NADPH</name>
        <dbReference type="ChEBI" id="CHEBI:57783"/>
    </ligand>
</feature>
<feature type="binding site" evidence="1">
    <location>
        <position position="19"/>
    </location>
    <ligand>
        <name>NADPH</name>
        <dbReference type="ChEBI" id="CHEBI:57783"/>
    </ligand>
</feature>
<feature type="binding site" evidence="1">
    <location>
        <position position="42"/>
    </location>
    <ligand>
        <name>NADPH</name>
        <dbReference type="ChEBI" id="CHEBI:57783"/>
    </ligand>
</feature>
<feature type="binding site" evidence="1">
    <location>
        <position position="43"/>
    </location>
    <ligand>
        <name>NADPH</name>
        <dbReference type="ChEBI" id="CHEBI:57783"/>
    </ligand>
</feature>
<feature type="binding site" evidence="1">
    <location>
        <position position="44"/>
    </location>
    <ligand>
        <name>NADPH</name>
        <dbReference type="ChEBI" id="CHEBI:57783"/>
    </ligand>
</feature>
<feature type="binding site" evidence="1">
    <location>
        <position position="127"/>
    </location>
    <ligand>
        <name>NADPH</name>
        <dbReference type="ChEBI" id="CHEBI:57783"/>
    </ligand>
</feature>
<feature type="binding site" evidence="1">
    <location>
        <position position="128"/>
    </location>
    <ligand>
        <name>1-deoxy-D-xylulose 5-phosphate</name>
        <dbReference type="ChEBI" id="CHEBI:57792"/>
    </ligand>
</feature>
<feature type="binding site" evidence="1">
    <location>
        <position position="129"/>
    </location>
    <ligand>
        <name>NADPH</name>
        <dbReference type="ChEBI" id="CHEBI:57783"/>
    </ligand>
</feature>
<feature type="binding site" evidence="1">
    <location>
        <position position="153"/>
    </location>
    <ligand>
        <name>Mn(2+)</name>
        <dbReference type="ChEBI" id="CHEBI:29035"/>
    </ligand>
</feature>
<feature type="binding site" evidence="1">
    <location>
        <position position="154"/>
    </location>
    <ligand>
        <name>1-deoxy-D-xylulose 5-phosphate</name>
        <dbReference type="ChEBI" id="CHEBI:57792"/>
    </ligand>
</feature>
<feature type="binding site" evidence="1">
    <location>
        <position position="155"/>
    </location>
    <ligand>
        <name>1-deoxy-D-xylulose 5-phosphate</name>
        <dbReference type="ChEBI" id="CHEBI:57792"/>
    </ligand>
</feature>
<feature type="binding site" evidence="1">
    <location>
        <position position="155"/>
    </location>
    <ligand>
        <name>Mn(2+)</name>
        <dbReference type="ChEBI" id="CHEBI:29035"/>
    </ligand>
</feature>
<feature type="binding site" evidence="1">
    <location>
        <position position="179"/>
    </location>
    <ligand>
        <name>1-deoxy-D-xylulose 5-phosphate</name>
        <dbReference type="ChEBI" id="CHEBI:57792"/>
    </ligand>
</feature>
<feature type="binding site" evidence="1">
    <location>
        <position position="202"/>
    </location>
    <ligand>
        <name>1-deoxy-D-xylulose 5-phosphate</name>
        <dbReference type="ChEBI" id="CHEBI:57792"/>
    </ligand>
</feature>
<feature type="binding site" evidence="1">
    <location>
        <position position="208"/>
    </location>
    <ligand>
        <name>NADPH</name>
        <dbReference type="ChEBI" id="CHEBI:57783"/>
    </ligand>
</feature>
<feature type="binding site" evidence="1">
    <location>
        <position position="215"/>
    </location>
    <ligand>
        <name>1-deoxy-D-xylulose 5-phosphate</name>
        <dbReference type="ChEBI" id="CHEBI:57792"/>
    </ligand>
</feature>
<feature type="binding site" evidence="1">
    <location>
        <position position="220"/>
    </location>
    <ligand>
        <name>1-deoxy-D-xylulose 5-phosphate</name>
        <dbReference type="ChEBI" id="CHEBI:57792"/>
    </ligand>
</feature>
<feature type="binding site" evidence="1">
    <location>
        <position position="221"/>
    </location>
    <ligand>
        <name>1-deoxy-D-xylulose 5-phosphate</name>
        <dbReference type="ChEBI" id="CHEBI:57792"/>
    </ligand>
</feature>
<feature type="binding site" evidence="1">
    <location>
        <position position="224"/>
    </location>
    <ligand>
        <name>1-deoxy-D-xylulose 5-phosphate</name>
        <dbReference type="ChEBI" id="CHEBI:57792"/>
    </ligand>
</feature>
<feature type="binding site" evidence="1">
    <location>
        <position position="224"/>
    </location>
    <ligand>
        <name>Mn(2+)</name>
        <dbReference type="ChEBI" id="CHEBI:29035"/>
    </ligand>
</feature>
<sequence length="393" mass="41390">MSPRPEKRRVSIFGATGSIGQNTIDLIARAPEAYDVVALTGARNIAQLAADARRLSASIAVTAEEELLPDLRAALEGSGVEAAAGEAALLEAADRPADWIMSAIVGAAGLAPGFRALRHGTTLALANKESLVTAGPLLLAEAATHGATILPVDSEHSAVFQALVGEDIAAVERIIITASGGGLRDWPEDDLARATPADAGAHPNWDMGQRITIDSASMFNKAMELIETKEFFGVSPARIEAVVHPQSLIHALVGFTDGALMAHLGPPDMRHAIGYALNYPDRAHLPVDRLDLAQIARLEFHAPSDTRYPALKIAREVMQTGGQSGCIFNAAKEIALDGFLAGKIGFMDMSGIVSDTLDAMSSKNSLSNAPETLEDVLQTDQMARNIASARLAR</sequence>
<name>DXR_JANSC</name>
<comment type="function">
    <text evidence="1">Catalyzes the NADPH-dependent rearrangement and reduction of 1-deoxy-D-xylulose-5-phosphate (DXP) to 2-C-methyl-D-erythritol 4-phosphate (MEP).</text>
</comment>
<comment type="catalytic activity">
    <reaction evidence="1">
        <text>2-C-methyl-D-erythritol 4-phosphate + NADP(+) = 1-deoxy-D-xylulose 5-phosphate + NADPH + H(+)</text>
        <dbReference type="Rhea" id="RHEA:13717"/>
        <dbReference type="ChEBI" id="CHEBI:15378"/>
        <dbReference type="ChEBI" id="CHEBI:57783"/>
        <dbReference type="ChEBI" id="CHEBI:57792"/>
        <dbReference type="ChEBI" id="CHEBI:58262"/>
        <dbReference type="ChEBI" id="CHEBI:58349"/>
        <dbReference type="EC" id="1.1.1.267"/>
    </reaction>
    <physiologicalReaction direction="right-to-left" evidence="1">
        <dbReference type="Rhea" id="RHEA:13719"/>
    </physiologicalReaction>
</comment>
<comment type="cofactor">
    <cofactor evidence="1">
        <name>Mg(2+)</name>
        <dbReference type="ChEBI" id="CHEBI:18420"/>
    </cofactor>
    <cofactor evidence="1">
        <name>Mn(2+)</name>
        <dbReference type="ChEBI" id="CHEBI:29035"/>
    </cofactor>
</comment>
<comment type="pathway">
    <text evidence="1">Isoprenoid biosynthesis; isopentenyl diphosphate biosynthesis via DXP pathway; isopentenyl diphosphate from 1-deoxy-D-xylulose 5-phosphate: step 1/6.</text>
</comment>
<comment type="similarity">
    <text evidence="1">Belongs to the DXR family.</text>
</comment>
<dbReference type="EC" id="1.1.1.267" evidence="1"/>
<dbReference type="EMBL" id="CP000264">
    <property type="protein sequence ID" value="ABD55372.1"/>
    <property type="molecule type" value="Genomic_DNA"/>
</dbReference>
<dbReference type="RefSeq" id="WP_011455576.1">
    <property type="nucleotide sequence ID" value="NC_007802.1"/>
</dbReference>
<dbReference type="SMR" id="Q28PJ0"/>
<dbReference type="STRING" id="290400.Jann_2455"/>
<dbReference type="KEGG" id="jan:Jann_2455"/>
<dbReference type="eggNOG" id="COG0743">
    <property type="taxonomic scope" value="Bacteria"/>
</dbReference>
<dbReference type="HOGENOM" id="CLU_035714_4_0_5"/>
<dbReference type="OrthoDB" id="9806546at2"/>
<dbReference type="UniPathway" id="UPA00056">
    <property type="reaction ID" value="UER00092"/>
</dbReference>
<dbReference type="Proteomes" id="UP000008326">
    <property type="component" value="Chromosome"/>
</dbReference>
<dbReference type="GO" id="GO:0030604">
    <property type="term" value="F:1-deoxy-D-xylulose-5-phosphate reductoisomerase activity"/>
    <property type="evidence" value="ECO:0007669"/>
    <property type="project" value="UniProtKB-UniRule"/>
</dbReference>
<dbReference type="GO" id="GO:0030145">
    <property type="term" value="F:manganese ion binding"/>
    <property type="evidence" value="ECO:0007669"/>
    <property type="project" value="TreeGrafter"/>
</dbReference>
<dbReference type="GO" id="GO:0070402">
    <property type="term" value="F:NADPH binding"/>
    <property type="evidence" value="ECO:0007669"/>
    <property type="project" value="InterPro"/>
</dbReference>
<dbReference type="GO" id="GO:0051484">
    <property type="term" value="P:isopentenyl diphosphate biosynthetic process, methylerythritol 4-phosphate pathway involved in terpenoid biosynthetic process"/>
    <property type="evidence" value="ECO:0007669"/>
    <property type="project" value="TreeGrafter"/>
</dbReference>
<dbReference type="FunFam" id="3.40.50.720:FF:000045">
    <property type="entry name" value="1-deoxy-D-xylulose 5-phosphate reductoisomerase"/>
    <property type="match status" value="1"/>
</dbReference>
<dbReference type="Gene3D" id="1.10.1740.10">
    <property type="match status" value="1"/>
</dbReference>
<dbReference type="Gene3D" id="3.40.50.720">
    <property type="entry name" value="NAD(P)-binding Rossmann-like Domain"/>
    <property type="match status" value="1"/>
</dbReference>
<dbReference type="HAMAP" id="MF_00183">
    <property type="entry name" value="DXP_reductoisom"/>
    <property type="match status" value="1"/>
</dbReference>
<dbReference type="InterPro" id="IPR003821">
    <property type="entry name" value="DXP_reductoisomerase"/>
</dbReference>
<dbReference type="InterPro" id="IPR013644">
    <property type="entry name" value="DXP_reductoisomerase_C"/>
</dbReference>
<dbReference type="InterPro" id="IPR013512">
    <property type="entry name" value="DXP_reductoisomerase_N"/>
</dbReference>
<dbReference type="InterPro" id="IPR026877">
    <property type="entry name" value="DXPR_C"/>
</dbReference>
<dbReference type="InterPro" id="IPR036169">
    <property type="entry name" value="DXPR_C_sf"/>
</dbReference>
<dbReference type="InterPro" id="IPR036291">
    <property type="entry name" value="NAD(P)-bd_dom_sf"/>
</dbReference>
<dbReference type="NCBIfam" id="TIGR00243">
    <property type="entry name" value="Dxr"/>
    <property type="match status" value="1"/>
</dbReference>
<dbReference type="PANTHER" id="PTHR30525">
    <property type="entry name" value="1-DEOXY-D-XYLULOSE 5-PHOSPHATE REDUCTOISOMERASE"/>
    <property type="match status" value="1"/>
</dbReference>
<dbReference type="PANTHER" id="PTHR30525:SF0">
    <property type="entry name" value="1-DEOXY-D-XYLULOSE 5-PHOSPHATE REDUCTOISOMERASE, CHLOROPLASTIC"/>
    <property type="match status" value="1"/>
</dbReference>
<dbReference type="Pfam" id="PF08436">
    <property type="entry name" value="DXP_redisom_C"/>
    <property type="match status" value="1"/>
</dbReference>
<dbReference type="Pfam" id="PF02670">
    <property type="entry name" value="DXP_reductoisom"/>
    <property type="match status" value="1"/>
</dbReference>
<dbReference type="Pfam" id="PF13288">
    <property type="entry name" value="DXPR_C"/>
    <property type="match status" value="1"/>
</dbReference>
<dbReference type="PIRSF" id="PIRSF006205">
    <property type="entry name" value="Dxp_reductismrs"/>
    <property type="match status" value="1"/>
</dbReference>
<dbReference type="SUPFAM" id="SSF69055">
    <property type="entry name" value="1-deoxy-D-xylulose-5-phosphate reductoisomerase, C-terminal domain"/>
    <property type="match status" value="1"/>
</dbReference>
<dbReference type="SUPFAM" id="SSF55347">
    <property type="entry name" value="Glyceraldehyde-3-phosphate dehydrogenase-like, C-terminal domain"/>
    <property type="match status" value="1"/>
</dbReference>
<dbReference type="SUPFAM" id="SSF51735">
    <property type="entry name" value="NAD(P)-binding Rossmann-fold domains"/>
    <property type="match status" value="1"/>
</dbReference>
<proteinExistence type="inferred from homology"/>
<evidence type="ECO:0000255" key="1">
    <source>
        <dbReference type="HAMAP-Rule" id="MF_00183"/>
    </source>
</evidence>